<feature type="transit peptide" description="Chloroplast" evidence="1">
    <location>
        <begin position="1"/>
        <end position="51"/>
    </location>
</feature>
<feature type="chain" id="PRO_0000439377" description="Translation initiation factor IF3-4, chloroplastic">
    <location>
        <begin position="52"/>
        <end position="281"/>
    </location>
</feature>
<feature type="region of interest" description="Disordered" evidence="3">
    <location>
        <begin position="63"/>
        <end position="86"/>
    </location>
</feature>
<feature type="region of interest" description="Disordered" evidence="3">
    <location>
        <begin position="253"/>
        <end position="281"/>
    </location>
</feature>
<feature type="compositionally biased region" description="Basic and acidic residues" evidence="3">
    <location>
        <begin position="70"/>
        <end position="79"/>
    </location>
</feature>
<feature type="compositionally biased region" description="Basic and acidic residues" evidence="3">
    <location>
        <begin position="253"/>
        <end position="270"/>
    </location>
</feature>
<accession>Q94B52</accession>
<accession>Q9SUH7</accession>
<gene>
    <name evidence="6" type="primary">IF3-4</name>
    <name evidence="7" type="synonym">SVR9L1</name>
    <name evidence="9" type="ordered locus">At4g30690</name>
    <name evidence="10" type="ORF">T10C21.40</name>
</gene>
<proteinExistence type="evidence at transcript level"/>
<evidence type="ECO:0000255" key="1"/>
<evidence type="ECO:0000255" key="2">
    <source>
        <dbReference type="HAMAP-Rule" id="MF_00080"/>
    </source>
</evidence>
<evidence type="ECO:0000256" key="3">
    <source>
        <dbReference type="SAM" id="MobiDB-lite"/>
    </source>
</evidence>
<evidence type="ECO:0000269" key="4">
    <source>
    </source>
</evidence>
<evidence type="ECO:0000269" key="5">
    <source>
    </source>
</evidence>
<evidence type="ECO:0000303" key="6">
    <source>
    </source>
</evidence>
<evidence type="ECO:0000303" key="7">
    <source>
    </source>
</evidence>
<evidence type="ECO:0000305" key="8"/>
<evidence type="ECO:0000312" key="9">
    <source>
        <dbReference type="Araport" id="AT4G30690"/>
    </source>
</evidence>
<evidence type="ECO:0000312" key="10">
    <source>
        <dbReference type="EMBL" id="CAB52442.1"/>
    </source>
</evidence>
<organism>
    <name type="scientific">Arabidopsis thaliana</name>
    <name type="common">Mouse-ear cress</name>
    <dbReference type="NCBI Taxonomy" id="3702"/>
    <lineage>
        <taxon>Eukaryota</taxon>
        <taxon>Viridiplantae</taxon>
        <taxon>Streptophyta</taxon>
        <taxon>Embryophyta</taxon>
        <taxon>Tracheophyta</taxon>
        <taxon>Spermatophyta</taxon>
        <taxon>Magnoliopsida</taxon>
        <taxon>eudicotyledons</taxon>
        <taxon>Gunneridae</taxon>
        <taxon>Pentapetalae</taxon>
        <taxon>rosids</taxon>
        <taxon>malvids</taxon>
        <taxon>Brassicales</taxon>
        <taxon>Brassicaceae</taxon>
        <taxon>Camelineae</taxon>
        <taxon>Arabidopsis</taxon>
    </lineage>
</organism>
<reference key="1">
    <citation type="journal article" date="1999" name="Nature">
        <title>Sequence and analysis of chromosome 4 of the plant Arabidopsis thaliana.</title>
        <authorList>
            <person name="Mayer K.F.X."/>
            <person name="Schueller C."/>
            <person name="Wambutt R."/>
            <person name="Murphy G."/>
            <person name="Volckaert G."/>
            <person name="Pohl T."/>
            <person name="Duesterhoeft A."/>
            <person name="Stiekema W."/>
            <person name="Entian K.-D."/>
            <person name="Terryn N."/>
            <person name="Harris B."/>
            <person name="Ansorge W."/>
            <person name="Brandt P."/>
            <person name="Grivell L.A."/>
            <person name="Rieger M."/>
            <person name="Weichselgartner M."/>
            <person name="de Simone V."/>
            <person name="Obermaier B."/>
            <person name="Mache R."/>
            <person name="Mueller M."/>
            <person name="Kreis M."/>
            <person name="Delseny M."/>
            <person name="Puigdomenech P."/>
            <person name="Watson M."/>
            <person name="Schmidtheini T."/>
            <person name="Reichert B."/>
            <person name="Portetelle D."/>
            <person name="Perez-Alonso M."/>
            <person name="Boutry M."/>
            <person name="Bancroft I."/>
            <person name="Vos P."/>
            <person name="Hoheisel J."/>
            <person name="Zimmermann W."/>
            <person name="Wedler H."/>
            <person name="Ridley P."/>
            <person name="Langham S.-A."/>
            <person name="McCullagh B."/>
            <person name="Bilham L."/>
            <person name="Robben J."/>
            <person name="van der Schueren J."/>
            <person name="Grymonprez B."/>
            <person name="Chuang Y.-J."/>
            <person name="Vandenbussche F."/>
            <person name="Braeken M."/>
            <person name="Weltjens I."/>
            <person name="Voet M."/>
            <person name="Bastiaens I."/>
            <person name="Aert R."/>
            <person name="Defoor E."/>
            <person name="Weitzenegger T."/>
            <person name="Bothe G."/>
            <person name="Ramsperger U."/>
            <person name="Hilbert H."/>
            <person name="Braun M."/>
            <person name="Holzer E."/>
            <person name="Brandt A."/>
            <person name="Peters S."/>
            <person name="van Staveren M."/>
            <person name="Dirkse W."/>
            <person name="Mooijman P."/>
            <person name="Klein Lankhorst R."/>
            <person name="Rose M."/>
            <person name="Hauf J."/>
            <person name="Koetter P."/>
            <person name="Berneiser S."/>
            <person name="Hempel S."/>
            <person name="Feldpausch M."/>
            <person name="Lamberth S."/>
            <person name="Van den Daele H."/>
            <person name="De Keyser A."/>
            <person name="Buysshaert C."/>
            <person name="Gielen J."/>
            <person name="Villarroel R."/>
            <person name="De Clercq R."/>
            <person name="van Montagu M."/>
            <person name="Rogers J."/>
            <person name="Cronin A."/>
            <person name="Quail M.A."/>
            <person name="Bray-Allen S."/>
            <person name="Clark L."/>
            <person name="Doggett J."/>
            <person name="Hall S."/>
            <person name="Kay M."/>
            <person name="Lennard N."/>
            <person name="McLay K."/>
            <person name="Mayes R."/>
            <person name="Pettett A."/>
            <person name="Rajandream M.A."/>
            <person name="Lyne M."/>
            <person name="Benes V."/>
            <person name="Rechmann S."/>
            <person name="Borkova D."/>
            <person name="Bloecker H."/>
            <person name="Scharfe M."/>
            <person name="Grimm M."/>
            <person name="Loehnert T.-H."/>
            <person name="Dose S."/>
            <person name="de Haan M."/>
            <person name="Maarse A.C."/>
            <person name="Schaefer M."/>
            <person name="Mueller-Auer S."/>
            <person name="Gabel C."/>
            <person name="Fuchs M."/>
            <person name="Fartmann B."/>
            <person name="Granderath K."/>
            <person name="Dauner D."/>
            <person name="Herzl A."/>
            <person name="Neumann S."/>
            <person name="Argiriou A."/>
            <person name="Vitale D."/>
            <person name="Liguori R."/>
            <person name="Piravandi E."/>
            <person name="Massenet O."/>
            <person name="Quigley F."/>
            <person name="Clabauld G."/>
            <person name="Muendlein A."/>
            <person name="Felber R."/>
            <person name="Schnabl S."/>
            <person name="Hiller R."/>
            <person name="Schmidt W."/>
            <person name="Lecharny A."/>
            <person name="Aubourg S."/>
            <person name="Chefdor F."/>
            <person name="Cooke R."/>
            <person name="Berger C."/>
            <person name="Monfort A."/>
            <person name="Casacuberta E."/>
            <person name="Gibbons T."/>
            <person name="Weber N."/>
            <person name="Vandenbol M."/>
            <person name="Bargues M."/>
            <person name="Terol J."/>
            <person name="Torres A."/>
            <person name="Perez-Perez A."/>
            <person name="Purnelle B."/>
            <person name="Bent E."/>
            <person name="Johnson S."/>
            <person name="Tacon D."/>
            <person name="Jesse T."/>
            <person name="Heijnen L."/>
            <person name="Schwarz S."/>
            <person name="Scholler P."/>
            <person name="Heber S."/>
            <person name="Francs P."/>
            <person name="Bielke C."/>
            <person name="Frishman D."/>
            <person name="Haase D."/>
            <person name="Lemcke K."/>
            <person name="Mewes H.-W."/>
            <person name="Stocker S."/>
            <person name="Zaccaria P."/>
            <person name="Bevan M."/>
            <person name="Wilson R.K."/>
            <person name="de la Bastide M."/>
            <person name="Habermann K."/>
            <person name="Parnell L."/>
            <person name="Dedhia N."/>
            <person name="Gnoj L."/>
            <person name="Schutz K."/>
            <person name="Huang E."/>
            <person name="Spiegel L."/>
            <person name="Sekhon M."/>
            <person name="Murray J."/>
            <person name="Sheet P."/>
            <person name="Cordes M."/>
            <person name="Abu-Threideh J."/>
            <person name="Stoneking T."/>
            <person name="Kalicki J."/>
            <person name="Graves T."/>
            <person name="Harmon G."/>
            <person name="Edwards J."/>
            <person name="Latreille P."/>
            <person name="Courtney L."/>
            <person name="Cloud J."/>
            <person name="Abbott A."/>
            <person name="Scott K."/>
            <person name="Johnson D."/>
            <person name="Minx P."/>
            <person name="Bentley D."/>
            <person name="Fulton B."/>
            <person name="Miller N."/>
            <person name="Greco T."/>
            <person name="Kemp K."/>
            <person name="Kramer J."/>
            <person name="Fulton L."/>
            <person name="Mardis E."/>
            <person name="Dante M."/>
            <person name="Pepin K."/>
            <person name="Hillier L.W."/>
            <person name="Nelson J."/>
            <person name="Spieth J."/>
            <person name="Ryan E."/>
            <person name="Andrews S."/>
            <person name="Geisel C."/>
            <person name="Layman D."/>
            <person name="Du H."/>
            <person name="Ali J."/>
            <person name="Berghoff A."/>
            <person name="Jones K."/>
            <person name="Drone K."/>
            <person name="Cotton M."/>
            <person name="Joshu C."/>
            <person name="Antonoiu B."/>
            <person name="Zidanic M."/>
            <person name="Strong C."/>
            <person name="Sun H."/>
            <person name="Lamar B."/>
            <person name="Yordan C."/>
            <person name="Ma P."/>
            <person name="Zhong J."/>
            <person name="Preston R."/>
            <person name="Vil D."/>
            <person name="Shekher M."/>
            <person name="Matero A."/>
            <person name="Shah R."/>
            <person name="Swaby I.K."/>
            <person name="O'Shaughnessy A."/>
            <person name="Rodriguez M."/>
            <person name="Hoffman J."/>
            <person name="Till S."/>
            <person name="Granat S."/>
            <person name="Shohdy N."/>
            <person name="Hasegawa A."/>
            <person name="Hameed A."/>
            <person name="Lodhi M."/>
            <person name="Johnson A."/>
            <person name="Chen E."/>
            <person name="Marra M.A."/>
            <person name="Martienssen R."/>
            <person name="McCombie W.R."/>
        </authorList>
    </citation>
    <scope>NUCLEOTIDE SEQUENCE [LARGE SCALE GENOMIC DNA]</scope>
    <source>
        <strain>cv. Columbia</strain>
    </source>
</reference>
<reference key="2">
    <citation type="journal article" date="2017" name="Plant J.">
        <title>Araport11: a complete reannotation of the Arabidopsis thaliana reference genome.</title>
        <authorList>
            <person name="Cheng C.Y."/>
            <person name="Krishnakumar V."/>
            <person name="Chan A.P."/>
            <person name="Thibaud-Nissen F."/>
            <person name="Schobel S."/>
            <person name="Town C.D."/>
        </authorList>
    </citation>
    <scope>GENOME REANNOTATION</scope>
    <source>
        <strain>cv. Columbia</strain>
    </source>
</reference>
<reference key="3">
    <citation type="journal article" date="2003" name="Science">
        <title>Empirical analysis of transcriptional activity in the Arabidopsis genome.</title>
        <authorList>
            <person name="Yamada K."/>
            <person name="Lim J."/>
            <person name="Dale J.M."/>
            <person name="Chen H."/>
            <person name="Shinn P."/>
            <person name="Palm C.J."/>
            <person name="Southwick A.M."/>
            <person name="Wu H.C."/>
            <person name="Kim C.J."/>
            <person name="Nguyen M."/>
            <person name="Pham P.K."/>
            <person name="Cheuk R.F."/>
            <person name="Karlin-Newmann G."/>
            <person name="Liu S.X."/>
            <person name="Lam B."/>
            <person name="Sakano H."/>
            <person name="Wu T."/>
            <person name="Yu G."/>
            <person name="Miranda M."/>
            <person name="Quach H.L."/>
            <person name="Tripp M."/>
            <person name="Chang C.H."/>
            <person name="Lee J.M."/>
            <person name="Toriumi M.J."/>
            <person name="Chan M.M."/>
            <person name="Tang C.C."/>
            <person name="Onodera C.S."/>
            <person name="Deng J.M."/>
            <person name="Akiyama K."/>
            <person name="Ansari Y."/>
            <person name="Arakawa T."/>
            <person name="Banh J."/>
            <person name="Banno F."/>
            <person name="Bowser L."/>
            <person name="Brooks S.Y."/>
            <person name="Carninci P."/>
            <person name="Chao Q."/>
            <person name="Choy N."/>
            <person name="Enju A."/>
            <person name="Goldsmith A.D."/>
            <person name="Gurjal M."/>
            <person name="Hansen N.F."/>
            <person name="Hayashizaki Y."/>
            <person name="Johnson-Hopson C."/>
            <person name="Hsuan V.W."/>
            <person name="Iida K."/>
            <person name="Karnes M."/>
            <person name="Khan S."/>
            <person name="Koesema E."/>
            <person name="Ishida J."/>
            <person name="Jiang P.X."/>
            <person name="Jones T."/>
            <person name="Kawai J."/>
            <person name="Kamiya A."/>
            <person name="Meyers C."/>
            <person name="Nakajima M."/>
            <person name="Narusaka M."/>
            <person name="Seki M."/>
            <person name="Sakurai T."/>
            <person name="Satou M."/>
            <person name="Tamse R."/>
            <person name="Vaysberg M."/>
            <person name="Wallender E.K."/>
            <person name="Wong C."/>
            <person name="Yamamura Y."/>
            <person name="Yuan S."/>
            <person name="Shinozaki K."/>
            <person name="Davis R.W."/>
            <person name="Theologis A."/>
            <person name="Ecker J.R."/>
        </authorList>
    </citation>
    <scope>NUCLEOTIDE SEQUENCE [LARGE SCALE MRNA]</scope>
    <source>
        <strain>cv. Columbia</strain>
    </source>
</reference>
<reference key="4">
    <citation type="journal article" date="2015" name="Photosyn. Res.">
        <title>Translation initiation factor 3 families: what are their roles in regulating cyanobacterial and chloroplast gene expression?</title>
        <authorList>
            <person name="Nesbit A.D."/>
            <person name="Whippo C."/>
            <person name="Hangarter R.P."/>
            <person name="Kehoe D.M."/>
        </authorList>
    </citation>
    <scope>SUBCELLULAR LOCATION</scope>
</reference>
<reference key="5">
    <citation type="journal article" date="2016" name="Plant Physiol.">
        <title>Chloroplast translation initiation factors regulate leaf variegation and development.</title>
        <authorList>
            <person name="Zheng M."/>
            <person name="Liu X."/>
            <person name="Liang S."/>
            <person name="Fu S."/>
            <person name="Qi Y."/>
            <person name="Zhao J."/>
            <person name="Shao J."/>
            <person name="An L."/>
            <person name="Yu F."/>
        </authorList>
    </citation>
    <scope>FUNCTION</scope>
    <scope>SUBCELLULAR LOCATION</scope>
    <scope>DISRUPTION PHENOTYPE</scope>
</reference>
<comment type="function">
    <text evidence="2 5">Chloroplast translation initiation factor that is essential for the coordination of leaf and chloroplast development (PubMed:27535792). IF-3 binds to the 30S ribosomal subunit and shifts the equilibrium between 70S ribosomes and their 50S and 30S subunits in favor of the free subunits, thus enhancing the availability of 30S subunits on which protein synthesis initiation begins (By similarity).</text>
</comment>
<comment type="subunit">
    <text evidence="2">Monomer.</text>
</comment>
<comment type="subcellular location">
    <subcellularLocation>
        <location evidence="4 5">Plastid</location>
        <location evidence="4 5">Chloroplast</location>
    </subcellularLocation>
</comment>
<comment type="disruption phenotype">
    <text evidence="5">No visible phenotype under normal growth conditions.</text>
</comment>
<comment type="similarity">
    <text evidence="2">Belongs to the IF-3 family.</text>
</comment>
<comment type="sequence caution" evidence="8">
    <conflict type="erroneous gene model prediction">
        <sequence resource="EMBL-CDS" id="CAB52442"/>
    </conflict>
</comment>
<comment type="sequence caution" evidence="8">
    <conflict type="erroneous gene model prediction">
        <sequence resource="EMBL-CDS" id="CAB79787"/>
    </conflict>
</comment>
<sequence>MAGITSTVGFNAILAGATKTVSHPVKSKLFGLRLCVPEFSIVSLSPYHHRRCPAITCRYGGGGGGGSRFPGDRRGRQKESEDDDSLDISAIRSATVRLIDDQQNMIGLVSKEEAVRRAEDAELDLVILSPDADPPVVRMMDYSKYRYEQQKRKKEQQKKTTRMDLKELKMGYNIDQHDYSVRMRAARKFLQDGDKVKVIVNMKGRENEFRNIAIELLRRFQTEIGELGTEESKNFRDRNLFIVLVPNKEVIRKVQEPPPKKKKKPADDKVSAANITATQDI</sequence>
<name>IF34_ARATH</name>
<dbReference type="EMBL" id="AL109787">
    <property type="protein sequence ID" value="CAB52442.1"/>
    <property type="status" value="ALT_SEQ"/>
    <property type="molecule type" value="Genomic_DNA"/>
</dbReference>
<dbReference type="EMBL" id="AL161577">
    <property type="protein sequence ID" value="CAB79787.1"/>
    <property type="status" value="ALT_SEQ"/>
    <property type="molecule type" value="Genomic_DNA"/>
</dbReference>
<dbReference type="EMBL" id="CP002687">
    <property type="protein sequence ID" value="AEE85796.1"/>
    <property type="molecule type" value="Genomic_DNA"/>
</dbReference>
<dbReference type="EMBL" id="AY042848">
    <property type="protein sequence ID" value="AAK68788.1"/>
    <property type="molecule type" value="mRNA"/>
</dbReference>
<dbReference type="EMBL" id="AY072500">
    <property type="protein sequence ID" value="AAL66915.1"/>
    <property type="molecule type" value="mRNA"/>
</dbReference>
<dbReference type="PIR" id="B85359">
    <property type="entry name" value="B85359"/>
</dbReference>
<dbReference type="RefSeq" id="NP_567851.1">
    <property type="nucleotide sequence ID" value="NM_119215.4"/>
</dbReference>
<dbReference type="SMR" id="Q94B52"/>
<dbReference type="FunCoup" id="Q94B52">
    <property type="interactions" value="667"/>
</dbReference>
<dbReference type="STRING" id="3702.Q94B52"/>
<dbReference type="iPTMnet" id="Q94B52"/>
<dbReference type="PaxDb" id="3702-AT4G30690.1"/>
<dbReference type="ProteomicsDB" id="228881"/>
<dbReference type="EnsemblPlants" id="AT4G30690.1">
    <property type="protein sequence ID" value="AT4G30690.1"/>
    <property type="gene ID" value="AT4G30690"/>
</dbReference>
<dbReference type="GeneID" id="829192"/>
<dbReference type="Gramene" id="AT4G30690.1">
    <property type="protein sequence ID" value="AT4G30690.1"/>
    <property type="gene ID" value="AT4G30690"/>
</dbReference>
<dbReference type="KEGG" id="ath:AT4G30690"/>
<dbReference type="Araport" id="AT4G30690"/>
<dbReference type="TAIR" id="AT4G30690">
    <property type="gene designation" value="ATINFC-4"/>
</dbReference>
<dbReference type="eggNOG" id="ENOG502QUHV">
    <property type="taxonomic scope" value="Eukaryota"/>
</dbReference>
<dbReference type="HOGENOM" id="CLU_054919_3_1_1"/>
<dbReference type="InParanoid" id="Q94B52"/>
<dbReference type="OMA" id="RFLAITC"/>
<dbReference type="OrthoDB" id="21573at2759"/>
<dbReference type="PhylomeDB" id="Q94B52"/>
<dbReference type="PRO" id="PR:Q94B52"/>
<dbReference type="Proteomes" id="UP000006548">
    <property type="component" value="Chromosome 4"/>
</dbReference>
<dbReference type="ExpressionAtlas" id="Q94B52">
    <property type="expression patterns" value="baseline and differential"/>
</dbReference>
<dbReference type="GO" id="GO:0009507">
    <property type="term" value="C:chloroplast"/>
    <property type="evidence" value="ECO:0000314"/>
    <property type="project" value="TAIR"/>
</dbReference>
<dbReference type="GO" id="GO:0005886">
    <property type="term" value="C:plasma membrane"/>
    <property type="evidence" value="ECO:0007005"/>
    <property type="project" value="TAIR"/>
</dbReference>
<dbReference type="GO" id="GO:0003729">
    <property type="term" value="F:mRNA binding"/>
    <property type="evidence" value="ECO:0000314"/>
    <property type="project" value="TAIR"/>
</dbReference>
<dbReference type="GO" id="GO:0003743">
    <property type="term" value="F:translation initiation factor activity"/>
    <property type="evidence" value="ECO:0007669"/>
    <property type="project" value="UniProtKB-KW"/>
</dbReference>
<dbReference type="FunFam" id="3.10.20.80:FF:000003">
    <property type="entry name" value="Translation initiation factor IF-3"/>
    <property type="match status" value="1"/>
</dbReference>
<dbReference type="FunFam" id="3.30.110.10:FF:000003">
    <property type="entry name" value="Translation initiation factor IF-3"/>
    <property type="match status" value="1"/>
</dbReference>
<dbReference type="Gene3D" id="3.30.110.10">
    <property type="entry name" value="Translation initiation factor 3 (IF-3), C-terminal domain"/>
    <property type="match status" value="1"/>
</dbReference>
<dbReference type="Gene3D" id="3.10.20.80">
    <property type="entry name" value="Translation initiation factor 3 (IF-3), N-terminal domain"/>
    <property type="match status" value="1"/>
</dbReference>
<dbReference type="HAMAP" id="MF_00080">
    <property type="entry name" value="IF_3"/>
    <property type="match status" value="1"/>
</dbReference>
<dbReference type="InterPro" id="IPR036788">
    <property type="entry name" value="T_IF-3_C_sf"/>
</dbReference>
<dbReference type="InterPro" id="IPR036787">
    <property type="entry name" value="T_IF-3_N_sf"/>
</dbReference>
<dbReference type="InterPro" id="IPR019813">
    <property type="entry name" value="Translation_initiation_fac3_CS"/>
</dbReference>
<dbReference type="InterPro" id="IPR001288">
    <property type="entry name" value="Translation_initiation_fac_3"/>
</dbReference>
<dbReference type="InterPro" id="IPR019815">
    <property type="entry name" value="Translation_initiation_fac_3_C"/>
</dbReference>
<dbReference type="InterPro" id="IPR019814">
    <property type="entry name" value="Translation_initiation_fac_3_N"/>
</dbReference>
<dbReference type="NCBIfam" id="TIGR00168">
    <property type="entry name" value="infC"/>
    <property type="match status" value="1"/>
</dbReference>
<dbReference type="PANTHER" id="PTHR10938">
    <property type="entry name" value="TRANSLATION INITIATION FACTOR IF-3"/>
    <property type="match status" value="1"/>
</dbReference>
<dbReference type="PANTHER" id="PTHR10938:SF0">
    <property type="entry name" value="TRANSLATION INITIATION FACTOR IF-3, MITOCHONDRIAL"/>
    <property type="match status" value="1"/>
</dbReference>
<dbReference type="Pfam" id="PF00707">
    <property type="entry name" value="IF3_C"/>
    <property type="match status" value="1"/>
</dbReference>
<dbReference type="Pfam" id="PF05198">
    <property type="entry name" value="IF3_N"/>
    <property type="match status" value="1"/>
</dbReference>
<dbReference type="SUPFAM" id="SSF55200">
    <property type="entry name" value="Translation initiation factor IF3, C-terminal domain"/>
    <property type="match status" value="1"/>
</dbReference>
<dbReference type="SUPFAM" id="SSF54364">
    <property type="entry name" value="Translation initiation factor IF3, N-terminal domain"/>
    <property type="match status" value="1"/>
</dbReference>
<dbReference type="PROSITE" id="PS00938">
    <property type="entry name" value="IF3"/>
    <property type="match status" value="1"/>
</dbReference>
<protein>
    <recommendedName>
        <fullName evidence="8">Translation initiation factor IF3-4, chloroplastic</fullName>
        <shortName evidence="6">AtIF3-4</shortName>
    </recommendedName>
    <alternativeName>
        <fullName evidence="6">AtINFC-4</fullName>
    </alternativeName>
    <alternativeName>
        <fullName evidence="7">Protein SVR9-LIKE 1</fullName>
    </alternativeName>
</protein>
<keyword id="KW-0150">Chloroplast</keyword>
<keyword id="KW-0396">Initiation factor</keyword>
<keyword id="KW-0934">Plastid</keyword>
<keyword id="KW-0648">Protein biosynthesis</keyword>
<keyword id="KW-1185">Reference proteome</keyword>
<keyword id="KW-0809">Transit peptide</keyword>